<reference key="1">
    <citation type="submission" date="1999-05" db="EMBL/GenBank/DDBJ databases">
        <title>Cloning and expression of an Armillaria mellea metalloendopeptidase.</title>
        <authorList>
            <person name="Vad K."/>
            <person name="Thim L."/>
        </authorList>
    </citation>
    <scope>NUCLEOTIDE SEQUENCE [GENOMIC DNA]</scope>
</reference>
<reference key="2">
    <citation type="journal article" date="1999" name="Biochem. Biophys. Res. Commun.">
        <title>The lysine-specific proteinase from Armillaria mellea is a member of a novel class of metalloendopeptidases located in Basidiomycetes.</title>
        <authorList>
            <person name="Healy V."/>
            <person name="O'Connell J."/>
            <person name="McCarthy T.V."/>
            <person name="Doonan S."/>
        </authorList>
    </citation>
    <scope>PROTEIN SEQUENCE OF 184-209</scope>
</reference>
<reference key="3">
    <citation type="journal article" date="1978" name="Biochim. Biophys. Acta">
        <title>Specificity and inhibition studies of Armillaria mellea protease.</title>
        <authorList>
            <person name="Lewis W.G."/>
            <person name="Basford J.M."/>
            <person name="Walton P.L."/>
        </authorList>
    </citation>
    <scope>BIOPHYSICOCHEMICAL PROPERTIES</scope>
    <scope>SUBSTRATE SPECIFICITY</scope>
    <scope>ACTIVITY REGULATION</scope>
    <scope>ZINC-BINDING</scope>
    <scope>COFACTOR</scope>
</reference>
<organism>
    <name type="scientific">Armillaria mellea</name>
    <name type="common">Honey mushroom</name>
    <name type="synonym">Agaricus melleus</name>
    <dbReference type="NCBI Taxonomy" id="47429"/>
    <lineage>
        <taxon>Eukaryota</taxon>
        <taxon>Fungi</taxon>
        <taxon>Dikarya</taxon>
        <taxon>Basidiomycota</taxon>
        <taxon>Agaricomycotina</taxon>
        <taxon>Agaricomycetes</taxon>
        <taxon>Agaricomycetidae</taxon>
        <taxon>Agaricales</taxon>
        <taxon>Marasmiineae</taxon>
        <taxon>Physalacriaceae</taxon>
        <taxon>Armillaria</taxon>
    </lineage>
</organism>
<evidence type="ECO:0000250" key="1"/>
<evidence type="ECO:0000250" key="2">
    <source>
        <dbReference type="UniProtKB" id="P81054"/>
    </source>
</evidence>
<evidence type="ECO:0000255" key="3"/>
<evidence type="ECO:0000269" key="4">
    <source>
    </source>
</evidence>
<evidence type="ECO:0000305" key="5"/>
<keyword id="KW-0165">Cleavage on pair of basic residues</keyword>
<keyword id="KW-0903">Direct protein sequencing</keyword>
<keyword id="KW-1015">Disulfide bond</keyword>
<keyword id="KW-0378">Hydrolase</keyword>
<keyword id="KW-0479">Metal-binding</keyword>
<keyword id="KW-0482">Metalloprotease</keyword>
<keyword id="KW-0645">Protease</keyword>
<keyword id="KW-0964">Secreted</keyword>
<keyword id="KW-0732">Signal</keyword>
<keyword id="KW-0862">Zinc</keyword>
<keyword id="KW-0865">Zymogen</keyword>
<sequence length="351" mass="37551">MFSLSSRFFLYSLCLSAVAVSAAPGLSLSLSGADSVVDVENLNVAATLTNTGDTTLKILNDPSSILSSKFATHTFDISSDNGSPAFTGVKVKYDPNYVVKKNADSSFTVLAPGESVTVNHALGAAYNFTGSGAASYSIEPSSLFYYVDPDTNELASINADTQQHTTKISGTLAVARRSNLGKRISYNGCTSSRQTTLVSAAAAAQTYAQSSYNYLSSHTASTTRYVTWFGPYTSARHSTVLSCFSNMLAYPYANYEYDCTCTESDVYAYVYPSQFGTIYLCGAFWQTTTTGTDSRGGTLIHESSHFTIICGTQDYAYGQSAAKSLASSNPSEAIKNADNYEYFAENNPAQS</sequence>
<accession>Q9Y7F7</accession>
<protein>
    <recommendedName>
        <fullName>Peptidyl-Lys metalloendopeptidase</fullName>
        <shortName>MEP</shortName>
        <ecNumber>3.4.24.20</ecNumber>
    </recommendedName>
    <alternativeName>
        <fullName>AmMEP</fullName>
    </alternativeName>
</protein>
<feature type="signal peptide" evidence="3">
    <location>
        <begin position="1"/>
        <end position="22"/>
    </location>
</feature>
<feature type="propeptide" id="PRO_0000043401" evidence="3">
    <location>
        <begin position="23"/>
        <end position="183"/>
    </location>
</feature>
<feature type="chain" id="PRO_0000043402" description="Peptidyl-Lys metalloendopeptidase">
    <location>
        <begin position="184"/>
        <end position="351"/>
    </location>
</feature>
<feature type="active site" evidence="2">
    <location>
        <position position="302"/>
    </location>
</feature>
<feature type="binding site" evidence="2">
    <location>
        <position position="301"/>
    </location>
    <ligand>
        <name>Zn(2+)</name>
        <dbReference type="ChEBI" id="CHEBI:29105"/>
        <note>catalytic</note>
    </ligand>
</feature>
<feature type="binding site" evidence="2">
    <location>
        <position position="305"/>
    </location>
    <ligand>
        <name>Zn(2+)</name>
        <dbReference type="ChEBI" id="CHEBI:29105"/>
        <note>catalytic</note>
    </ligand>
</feature>
<feature type="binding site" evidence="2">
    <location>
        <position position="314"/>
    </location>
    <ligand>
        <name>Zn(2+)</name>
        <dbReference type="ChEBI" id="CHEBI:29105"/>
        <note>catalytic</note>
    </ligand>
</feature>
<feature type="site" description="Transition state stabilizer" evidence="1">
    <location>
        <position position="317"/>
    </location>
</feature>
<feature type="disulfide bond" evidence="2">
    <location>
        <begin position="189"/>
        <end position="259"/>
    </location>
</feature>
<feature type="disulfide bond" evidence="2">
    <location>
        <begin position="261"/>
        <end position="281"/>
    </location>
</feature>
<feature type="sequence conflict" description="In Ref. 2; AA sequence." evidence="5" ref="2">
    <original>C</original>
    <variation>W</variation>
    <location>
        <position position="189"/>
    </location>
</feature>
<feature type="sequence conflict" description="In Ref. 2; AA sequence." evidence="5" ref="2">
    <original>A</original>
    <variation>W</variation>
    <location>
        <position position="204"/>
    </location>
</feature>
<proteinExistence type="evidence at protein level"/>
<dbReference type="EC" id="3.4.24.20"/>
<dbReference type="EMBL" id="AJ238718">
    <property type="protein sequence ID" value="CAB42792.1"/>
    <property type="molecule type" value="Genomic_DNA"/>
</dbReference>
<dbReference type="SMR" id="Q9Y7F7"/>
<dbReference type="MEROPS" id="M35.004"/>
<dbReference type="KEGG" id="ag:CAB42792"/>
<dbReference type="BRENDA" id="3.4.24.20">
    <property type="organism ID" value="426"/>
</dbReference>
<dbReference type="GO" id="GO:0005576">
    <property type="term" value="C:extracellular region"/>
    <property type="evidence" value="ECO:0007669"/>
    <property type="project" value="UniProtKB-SubCell"/>
</dbReference>
<dbReference type="GO" id="GO:0046872">
    <property type="term" value="F:metal ion binding"/>
    <property type="evidence" value="ECO:0007669"/>
    <property type="project" value="UniProtKB-KW"/>
</dbReference>
<dbReference type="GO" id="GO:0004222">
    <property type="term" value="F:metalloendopeptidase activity"/>
    <property type="evidence" value="ECO:0007669"/>
    <property type="project" value="InterPro"/>
</dbReference>
<dbReference type="GO" id="GO:0006508">
    <property type="term" value="P:proteolysis"/>
    <property type="evidence" value="ECO:0007669"/>
    <property type="project" value="UniProtKB-KW"/>
</dbReference>
<dbReference type="CDD" id="cd11306">
    <property type="entry name" value="M35_peptidyl-Lys"/>
    <property type="match status" value="1"/>
</dbReference>
<dbReference type="Gene3D" id="2.60.40.2970">
    <property type="match status" value="1"/>
</dbReference>
<dbReference type="Gene3D" id="3.40.390.10">
    <property type="entry name" value="Collagenase (Catalytic Domain)"/>
    <property type="match status" value="1"/>
</dbReference>
<dbReference type="InterPro" id="IPR050414">
    <property type="entry name" value="Fungal_M35_metalloproteases"/>
</dbReference>
<dbReference type="InterPro" id="IPR029463">
    <property type="entry name" value="Lys_MEP"/>
</dbReference>
<dbReference type="InterPro" id="IPR034115">
    <property type="entry name" value="M35_peptidyl-Lys"/>
</dbReference>
<dbReference type="InterPro" id="IPR024079">
    <property type="entry name" value="MetalloPept_cat_dom_sf"/>
</dbReference>
<dbReference type="PANTHER" id="PTHR37016">
    <property type="match status" value="1"/>
</dbReference>
<dbReference type="PANTHER" id="PTHR37016:SF3">
    <property type="entry name" value="NEUTRAL PROTEASE 2-RELATED"/>
    <property type="match status" value="1"/>
</dbReference>
<dbReference type="Pfam" id="PF14521">
    <property type="entry name" value="Aspzincin_M35"/>
    <property type="match status" value="1"/>
</dbReference>
<dbReference type="SMART" id="SM01351">
    <property type="entry name" value="Aspzincin_M35"/>
    <property type="match status" value="1"/>
</dbReference>
<dbReference type="SUPFAM" id="SSF55486">
    <property type="entry name" value="Metalloproteases ('zincins'), catalytic domain"/>
    <property type="match status" value="1"/>
</dbReference>
<name>PLMP_ARMME</name>
<gene>
    <name type="primary">MEP</name>
</gene>
<comment type="catalytic activity">
    <reaction>
        <text>Preferential cleavage in proteins: -Xaa-|-Lys- (in which Xaa may be Pro).</text>
        <dbReference type="EC" id="3.4.24.20"/>
    </reaction>
</comment>
<comment type="cofactor">
    <cofactor evidence="4">
        <name>Zn(2+)</name>
        <dbReference type="ChEBI" id="CHEBI:29105"/>
    </cofactor>
    <text evidence="4">Binds 1 zinc ion per subunit.</text>
</comment>
<comment type="activity regulation">
    <text evidence="4">Inhibited by chelating agents such as imidazole, alpha,alpha'-bipyridine, and 1,10-phenanthroline.</text>
</comment>
<comment type="biophysicochemical properties">
    <phDependence>
        <text evidence="4">Optimum pH is 7-7.5. Active from pH 5.25 to pH 9.</text>
    </phDependence>
</comment>
<comment type="subcellular location">
    <subcellularLocation>
        <location evidence="1">Secreted</location>
    </subcellularLocation>
    <text evidence="1">Binds strongly to beta-1,3-glucan and chitin, major polysaccharides constituting the fungal cell wall.</text>
</comment>
<comment type="similarity">
    <text evidence="5">Belongs to the peptidase M35 family.</text>
</comment>